<organism>
    <name type="scientific">Caenorhabditis elegans</name>
    <dbReference type="NCBI Taxonomy" id="6239"/>
    <lineage>
        <taxon>Eukaryota</taxon>
        <taxon>Metazoa</taxon>
        <taxon>Ecdysozoa</taxon>
        <taxon>Nematoda</taxon>
        <taxon>Chromadorea</taxon>
        <taxon>Rhabditida</taxon>
        <taxon>Rhabditina</taxon>
        <taxon>Rhabditomorpha</taxon>
        <taxon>Rhabditoidea</taxon>
        <taxon>Rhabditidae</taxon>
        <taxon>Peloderinae</taxon>
        <taxon>Caenorhabditis</taxon>
    </lineage>
</organism>
<dbReference type="EMBL" id="AF273798">
    <property type="protein sequence ID" value="AAG15147.1"/>
    <property type="status" value="ALT_INIT"/>
    <property type="molecule type" value="mRNA"/>
</dbReference>
<dbReference type="EMBL" id="AF273799">
    <property type="protein sequence ID" value="AAG15148.1"/>
    <property type="status" value="ALT_INIT"/>
    <property type="molecule type" value="mRNA"/>
</dbReference>
<dbReference type="EMBL" id="Z83233">
    <property type="protein sequence ID" value="CAB05768.2"/>
    <property type="molecule type" value="Genomic_DNA"/>
</dbReference>
<dbReference type="PIR" id="T23372">
    <property type="entry name" value="T23372"/>
</dbReference>
<dbReference type="RefSeq" id="NP_741644.1">
    <property type="nucleotide sequence ID" value="NM_171556.5"/>
</dbReference>
<dbReference type="SMR" id="O17933"/>
<dbReference type="BioGRID" id="45046">
    <property type="interactions" value="7"/>
</dbReference>
<dbReference type="FunCoup" id="O17933">
    <property type="interactions" value="223"/>
</dbReference>
<dbReference type="IntAct" id="O17933">
    <property type="interactions" value="3"/>
</dbReference>
<dbReference type="STRING" id="6239.K06B4.11.1"/>
<dbReference type="PaxDb" id="6239-K06B4.11"/>
<dbReference type="EnsemblMetazoa" id="K06B4.11.1">
    <property type="protein sequence ID" value="K06B4.11.1"/>
    <property type="gene ID" value="WBGene00003643"/>
</dbReference>
<dbReference type="GeneID" id="180053"/>
<dbReference type="KEGG" id="cel:CELE_K06B4.11"/>
<dbReference type="UCSC" id="K06B4.11">
    <property type="organism name" value="c. elegans"/>
</dbReference>
<dbReference type="AGR" id="WB:WBGene00003643"/>
<dbReference type="CTD" id="180053"/>
<dbReference type="WormBase" id="K06B4.11">
    <property type="protein sequence ID" value="CE27770"/>
    <property type="gene ID" value="WBGene00003643"/>
    <property type="gene designation" value="nhr-53"/>
</dbReference>
<dbReference type="eggNOG" id="KOG3575">
    <property type="taxonomic scope" value="Eukaryota"/>
</dbReference>
<dbReference type="GeneTree" id="ENSGT00970000196534"/>
<dbReference type="HOGENOM" id="CLU_007368_1_1_1"/>
<dbReference type="InParanoid" id="O17933"/>
<dbReference type="OMA" id="FLCEAFP"/>
<dbReference type="OrthoDB" id="5830034at2759"/>
<dbReference type="PhylomeDB" id="O17933"/>
<dbReference type="PRO" id="PR:O17933"/>
<dbReference type="Proteomes" id="UP000001940">
    <property type="component" value="Chromosome V"/>
</dbReference>
<dbReference type="Bgee" id="WBGene00003643">
    <property type="expression patterns" value="Expressed in embryo and 2 other cell types or tissues"/>
</dbReference>
<dbReference type="GO" id="GO:0005634">
    <property type="term" value="C:nucleus"/>
    <property type="evidence" value="ECO:0000318"/>
    <property type="project" value="GO_Central"/>
</dbReference>
<dbReference type="GO" id="GO:0003700">
    <property type="term" value="F:DNA-binding transcription factor activity"/>
    <property type="evidence" value="ECO:0000318"/>
    <property type="project" value="GO_Central"/>
</dbReference>
<dbReference type="GO" id="GO:0043565">
    <property type="term" value="F:sequence-specific DNA binding"/>
    <property type="evidence" value="ECO:0007669"/>
    <property type="project" value="InterPro"/>
</dbReference>
<dbReference type="GO" id="GO:0008270">
    <property type="term" value="F:zinc ion binding"/>
    <property type="evidence" value="ECO:0007669"/>
    <property type="project" value="UniProtKB-KW"/>
</dbReference>
<dbReference type="GO" id="GO:0006357">
    <property type="term" value="P:regulation of transcription by RNA polymerase II"/>
    <property type="evidence" value="ECO:0000318"/>
    <property type="project" value="GO_Central"/>
</dbReference>
<dbReference type="Gene3D" id="3.30.50.10">
    <property type="entry name" value="Erythroid Transcription Factor GATA-1, subunit A"/>
    <property type="match status" value="1"/>
</dbReference>
<dbReference type="Gene3D" id="1.10.565.10">
    <property type="entry name" value="Retinoid X Receptor"/>
    <property type="match status" value="1"/>
</dbReference>
<dbReference type="InterPro" id="IPR035500">
    <property type="entry name" value="NHR-like_dom_sf"/>
</dbReference>
<dbReference type="InterPro" id="IPR000536">
    <property type="entry name" value="Nucl_hrmn_rcpt_lig-bd"/>
</dbReference>
<dbReference type="InterPro" id="IPR001628">
    <property type="entry name" value="Znf_hrmn_rcpt"/>
</dbReference>
<dbReference type="InterPro" id="IPR013088">
    <property type="entry name" value="Znf_NHR/GATA"/>
</dbReference>
<dbReference type="PANTHER" id="PTHR46011:SF10">
    <property type="entry name" value="NUCLEAR HORMONE RECEPTOR FAMILY MEMBER NHR-199-RELATED"/>
    <property type="match status" value="1"/>
</dbReference>
<dbReference type="PANTHER" id="PTHR46011">
    <property type="entry name" value="NUCLEAR HORMONE RECEPTOR FAMILY MEMBER NHR-86-RELATED"/>
    <property type="match status" value="1"/>
</dbReference>
<dbReference type="Pfam" id="PF00104">
    <property type="entry name" value="Hormone_recep"/>
    <property type="match status" value="1"/>
</dbReference>
<dbReference type="Pfam" id="PF00105">
    <property type="entry name" value="zf-C4"/>
    <property type="match status" value="1"/>
</dbReference>
<dbReference type="PRINTS" id="PR00047">
    <property type="entry name" value="STROIDFINGER"/>
</dbReference>
<dbReference type="SMART" id="SM00430">
    <property type="entry name" value="HOLI"/>
    <property type="match status" value="1"/>
</dbReference>
<dbReference type="SMART" id="SM00399">
    <property type="entry name" value="ZnF_C4"/>
    <property type="match status" value="1"/>
</dbReference>
<dbReference type="SUPFAM" id="SSF57716">
    <property type="entry name" value="Glucocorticoid receptor-like (DNA-binding domain)"/>
    <property type="match status" value="1"/>
</dbReference>
<dbReference type="SUPFAM" id="SSF48508">
    <property type="entry name" value="Nuclear receptor ligand-binding domain"/>
    <property type="match status" value="1"/>
</dbReference>
<dbReference type="PROSITE" id="PS51843">
    <property type="entry name" value="NR_LBD"/>
    <property type="match status" value="1"/>
</dbReference>
<dbReference type="PROSITE" id="PS00031">
    <property type="entry name" value="NUCLEAR_REC_DBD_1"/>
    <property type="match status" value="1"/>
</dbReference>
<dbReference type="PROSITE" id="PS51030">
    <property type="entry name" value="NUCLEAR_REC_DBD_2"/>
    <property type="match status" value="1"/>
</dbReference>
<protein>
    <recommendedName>
        <fullName>Nuclear hormone receptor family member nhr-53</fullName>
    </recommendedName>
</protein>
<evidence type="ECO:0000255" key="1">
    <source>
        <dbReference type="PROSITE-ProRule" id="PRU00407"/>
    </source>
</evidence>
<evidence type="ECO:0000255" key="2">
    <source>
        <dbReference type="PROSITE-ProRule" id="PRU01189"/>
    </source>
</evidence>
<evidence type="ECO:0000305" key="3"/>
<sequence>MPSPTHLLNNFESSSSQGPPSYCLICCEVADGHHFGAAACRACAAFFRRTVQLNKVHDCPKNGQCFILSNVRNMCRACRYEKCLEVGMQRSSVQQKRDQLGRRDGLPTNREEPVLDTMRRAYEKLLVVRKKVHNRQENQLPRAISFNELQVVYQNEMTVIYQFLCEAFPEYSELLPDTKRSLFKNFFLPFTLLESSYYGYLTKQENVMLIPSGDYVDLAHLESYFNNNHHTFSQKDTISMFAQQFRMLHTSITVPLSAENVDVNEFLALAAIILWESDLEVEADRKNVQEEAVKIKSAIIKDLLFHYQSINVYADVAMRLGAVLSILPSIQRASHRFHEYMEIKNLLNLYALPKNLYDMFSPTS</sequence>
<proteinExistence type="evidence at transcript level"/>
<keyword id="KW-0238">DNA-binding</keyword>
<keyword id="KW-0479">Metal-binding</keyword>
<keyword id="KW-0539">Nucleus</keyword>
<keyword id="KW-0675">Receptor</keyword>
<keyword id="KW-1185">Reference proteome</keyword>
<keyword id="KW-0804">Transcription</keyword>
<keyword id="KW-0805">Transcription regulation</keyword>
<keyword id="KW-0862">Zinc</keyword>
<keyword id="KW-0863">Zinc-finger</keyword>
<comment type="function">
    <text>Orphan nuclear receptor.</text>
</comment>
<comment type="subcellular location">
    <subcellularLocation>
        <location evidence="1">Nucleus</location>
    </subcellularLocation>
</comment>
<comment type="similarity">
    <text evidence="3">Belongs to the nuclear hormone receptor family.</text>
</comment>
<comment type="sequence caution" evidence="3">
    <conflict type="erroneous initiation">
        <sequence resource="EMBL-CDS" id="AAG15147"/>
    </conflict>
</comment>
<comment type="sequence caution" evidence="3">
    <conflict type="erroneous initiation">
        <sequence resource="EMBL-CDS" id="AAG15148"/>
    </conflict>
</comment>
<feature type="chain" id="PRO_0000053787" description="Nuclear hormone receptor family member nhr-53">
    <location>
        <begin position="1"/>
        <end position="364"/>
    </location>
</feature>
<feature type="domain" description="NR LBD" evidence="2">
    <location>
        <begin position="110"/>
        <end position="363"/>
    </location>
</feature>
<feature type="DNA-binding region" description="Nuclear receptor" evidence="1">
    <location>
        <begin position="20"/>
        <end position="95"/>
    </location>
</feature>
<feature type="zinc finger region" description="NR C4-type" evidence="1">
    <location>
        <begin position="23"/>
        <end position="43"/>
    </location>
</feature>
<feature type="zinc finger region" description="NR C4-type" evidence="1">
    <location>
        <begin position="59"/>
        <end position="83"/>
    </location>
</feature>
<reference key="1">
    <citation type="journal article" date="2005" name="J. Mol. Evol.">
        <title>Explosive lineage-specific expansion of the orphan nuclear receptor HNF4 in nematodes.</title>
        <authorList>
            <person name="Robinson-Rechavi M."/>
            <person name="Maina C.V."/>
            <person name="Gissendanner C.R."/>
            <person name="Laudet V."/>
            <person name="Sluder A."/>
        </authorList>
    </citation>
    <scope>NUCLEOTIDE SEQUENCE [MRNA]</scope>
</reference>
<reference key="2">
    <citation type="journal article" date="1998" name="Science">
        <title>Genome sequence of the nematode C. elegans: a platform for investigating biology.</title>
        <authorList>
            <consortium name="The C. elegans sequencing consortium"/>
        </authorList>
    </citation>
    <scope>NUCLEOTIDE SEQUENCE [LARGE SCALE GENOMIC DNA]</scope>
    <source>
        <strain>Bristol N2</strain>
    </source>
</reference>
<gene>
    <name type="primary">nhr-53</name>
    <name type="ORF">K06B4.11</name>
</gene>
<name>NHR53_CAEEL</name>
<accession>O17933</accession>
<accession>Q9GTG0</accession>
<accession>Q9GTG1</accession>